<comment type="function">
    <text evidence="1">Involved in the binding of tRNA to the ribosomes.</text>
</comment>
<comment type="subunit">
    <text evidence="1">Part of the 30S ribosomal subunit.</text>
</comment>
<comment type="similarity">
    <text evidence="1">Belongs to the universal ribosomal protein uS10 family.</text>
</comment>
<feature type="chain" id="PRO_1000127069" description="Small ribosomal subunit protein uS10">
    <location>
        <begin position="1"/>
        <end position="102"/>
    </location>
</feature>
<organism>
    <name type="scientific">Acidithiobacillus ferrooxidans (strain ATCC 53993 / BNL-5-31)</name>
    <name type="common">Leptospirillum ferrooxidans (ATCC 53993)</name>
    <dbReference type="NCBI Taxonomy" id="380394"/>
    <lineage>
        <taxon>Bacteria</taxon>
        <taxon>Pseudomonadati</taxon>
        <taxon>Pseudomonadota</taxon>
        <taxon>Acidithiobacillia</taxon>
        <taxon>Acidithiobacillales</taxon>
        <taxon>Acidithiobacillaceae</taxon>
        <taxon>Acidithiobacillus</taxon>
    </lineage>
</organism>
<protein>
    <recommendedName>
        <fullName evidence="1">Small ribosomal subunit protein uS10</fullName>
    </recommendedName>
    <alternativeName>
        <fullName evidence="2">30S ribosomal protein S10</fullName>
    </alternativeName>
</protein>
<name>RS10_ACIF5</name>
<reference key="1">
    <citation type="submission" date="2008-08" db="EMBL/GenBank/DDBJ databases">
        <title>Complete sequence of Acidithiobacillus ferrooxidans ATCC 53993.</title>
        <authorList>
            <person name="Lucas S."/>
            <person name="Copeland A."/>
            <person name="Lapidus A."/>
            <person name="Glavina del Rio T."/>
            <person name="Dalin E."/>
            <person name="Tice H."/>
            <person name="Bruce D."/>
            <person name="Goodwin L."/>
            <person name="Pitluck S."/>
            <person name="Sims D."/>
            <person name="Brettin T."/>
            <person name="Detter J.C."/>
            <person name="Han C."/>
            <person name="Kuske C.R."/>
            <person name="Larimer F."/>
            <person name="Land M."/>
            <person name="Hauser L."/>
            <person name="Kyrpides N."/>
            <person name="Lykidis A."/>
            <person name="Borole A.P."/>
        </authorList>
    </citation>
    <scope>NUCLEOTIDE SEQUENCE [LARGE SCALE GENOMIC DNA]</scope>
    <source>
        <strain>ATCC 53993 / BNL-5-31</strain>
    </source>
</reference>
<accession>B5ELX8</accession>
<gene>
    <name evidence="1" type="primary">rpsJ</name>
    <name type="ordered locus">Lferr_0496</name>
</gene>
<evidence type="ECO:0000255" key="1">
    <source>
        <dbReference type="HAMAP-Rule" id="MF_00508"/>
    </source>
</evidence>
<evidence type="ECO:0000305" key="2"/>
<keyword id="KW-0687">Ribonucleoprotein</keyword>
<keyword id="KW-0689">Ribosomal protein</keyword>
<dbReference type="EMBL" id="CP001132">
    <property type="protein sequence ID" value="ACH82750.1"/>
    <property type="molecule type" value="Genomic_DNA"/>
</dbReference>
<dbReference type="RefSeq" id="WP_012536086.1">
    <property type="nucleotide sequence ID" value="NC_011206.1"/>
</dbReference>
<dbReference type="SMR" id="B5ELX8"/>
<dbReference type="GeneID" id="65279705"/>
<dbReference type="KEGG" id="afe:Lferr_0496"/>
<dbReference type="eggNOG" id="COG0051">
    <property type="taxonomic scope" value="Bacteria"/>
</dbReference>
<dbReference type="HOGENOM" id="CLU_122625_1_3_6"/>
<dbReference type="GO" id="GO:1990904">
    <property type="term" value="C:ribonucleoprotein complex"/>
    <property type="evidence" value="ECO:0007669"/>
    <property type="project" value="UniProtKB-KW"/>
</dbReference>
<dbReference type="GO" id="GO:0005840">
    <property type="term" value="C:ribosome"/>
    <property type="evidence" value="ECO:0007669"/>
    <property type="project" value="UniProtKB-KW"/>
</dbReference>
<dbReference type="GO" id="GO:0003735">
    <property type="term" value="F:structural constituent of ribosome"/>
    <property type="evidence" value="ECO:0007669"/>
    <property type="project" value="InterPro"/>
</dbReference>
<dbReference type="GO" id="GO:0000049">
    <property type="term" value="F:tRNA binding"/>
    <property type="evidence" value="ECO:0007669"/>
    <property type="project" value="UniProtKB-UniRule"/>
</dbReference>
<dbReference type="GO" id="GO:0006412">
    <property type="term" value="P:translation"/>
    <property type="evidence" value="ECO:0007669"/>
    <property type="project" value="UniProtKB-UniRule"/>
</dbReference>
<dbReference type="FunFam" id="3.30.70.600:FF:000001">
    <property type="entry name" value="30S ribosomal protein S10"/>
    <property type="match status" value="1"/>
</dbReference>
<dbReference type="Gene3D" id="3.30.70.600">
    <property type="entry name" value="Ribosomal protein S10 domain"/>
    <property type="match status" value="1"/>
</dbReference>
<dbReference type="HAMAP" id="MF_00508">
    <property type="entry name" value="Ribosomal_uS10"/>
    <property type="match status" value="1"/>
</dbReference>
<dbReference type="InterPro" id="IPR001848">
    <property type="entry name" value="Ribosomal_uS10"/>
</dbReference>
<dbReference type="InterPro" id="IPR018268">
    <property type="entry name" value="Ribosomal_uS10_CS"/>
</dbReference>
<dbReference type="InterPro" id="IPR027486">
    <property type="entry name" value="Ribosomal_uS10_dom"/>
</dbReference>
<dbReference type="InterPro" id="IPR036838">
    <property type="entry name" value="Ribosomal_uS10_dom_sf"/>
</dbReference>
<dbReference type="NCBIfam" id="NF001861">
    <property type="entry name" value="PRK00596.1"/>
    <property type="match status" value="1"/>
</dbReference>
<dbReference type="NCBIfam" id="TIGR01049">
    <property type="entry name" value="rpsJ_bact"/>
    <property type="match status" value="1"/>
</dbReference>
<dbReference type="PANTHER" id="PTHR11700">
    <property type="entry name" value="30S RIBOSOMAL PROTEIN S10 FAMILY MEMBER"/>
    <property type="match status" value="1"/>
</dbReference>
<dbReference type="Pfam" id="PF00338">
    <property type="entry name" value="Ribosomal_S10"/>
    <property type="match status" value="1"/>
</dbReference>
<dbReference type="PRINTS" id="PR00971">
    <property type="entry name" value="RIBOSOMALS10"/>
</dbReference>
<dbReference type="SMART" id="SM01403">
    <property type="entry name" value="Ribosomal_S10"/>
    <property type="match status" value="1"/>
</dbReference>
<dbReference type="SUPFAM" id="SSF54999">
    <property type="entry name" value="Ribosomal protein S10"/>
    <property type="match status" value="1"/>
</dbReference>
<dbReference type="PROSITE" id="PS00361">
    <property type="entry name" value="RIBOSOMAL_S10"/>
    <property type="match status" value="1"/>
</dbReference>
<sequence length="102" mass="11643">MDSSKIRIRLKSYDYRMLDISAAEIVETARRTGARVCGPIPLPTKIERFTVLRSPHVDKNARDQFEQRTHKRLLDILDPNDKTVDALIKLDLAAGVDVEIKL</sequence>
<proteinExistence type="inferred from homology"/>